<comment type="function">
    <molecule>Isoform 1</molecule>
    <text>Heparan sulfate basal lamina glycoprotein that plays a central role in the formation and the maintenance of the neuromuscular junction (NMJ) and directs key events in postsynaptic differentiation. This neuron-specific (z+) isoform is a component of the AGRN-LRP4 receptor complex that induces the phosphorylation and activation of MUSK. The activation of MUSK in myotubes induces the formation of NMJ by regulating different processes including the transcription of specific genes and the clustering of AChR in the postsynaptic membrane. Calcium ions are required for maximal AChR clustering. AGRN function in neurons is highly regulated by alternative splicing, glycan binding and proteolytic processing. Modulates calcium ion homeostasis in neurons, specifically by inducing an increase in cytoplasmic calcium ions. Functions differentially in the central nervous system (CNS) by inhibiting the alpha(3)-subtype of Na+/K+-ATPase and evoking depolarization at CNS synapses. This transmembrane agrin (TM-agrin) isoform, the predominate form in neurons of the brain, induces dendritic filopodia and synapse formation in mature hippocampal neurons in large part due to the attached glycosaminoglycan chains and the action of Rho-family GTPases.</text>
</comment>
<comment type="function">
    <text>Isoform 1, isoform 4, isoform 5 and isoform 6: neuron-specific (z+) isoforms that contain C-terminal insertions of 8-19 AA are potent activators of AChR clustering. Isoform 5, agrin (z+8), containing the 8-AA insert, forms a receptor complex in myotubules containing the neuronal AGRN, the muscle-specific kinase MUSK and LRP4, a member of the LDL receptor family. The splicing factors, NOVA1 and NOVA2, regulate AGRN splicing and production of the 'z' isoforms.</text>
</comment>
<comment type="function">
    <molecule>Agrin N-terminal 110 kDa subunit</molecule>
    <text evidence="1 14 15 16 17 18 22 23 24">Is involved in regulation of neurite outgrowth probably due to the presence of the glycosaminoglcan (GAG) side chains of heparan and chondroitin sulfate attached to the Ser/Thr- and Gly/Ser-rich regions. Also involved in modulation of growth factor signaling (By similarity).</text>
</comment>
<comment type="function">
    <molecule>Agrin C-terminal 22 kDa fragment</molecule>
    <text>This released fragment is important for agrin signaling and to exert a maximal dendritic filopodia-inducing effect. All 'z' splice variants (z+) of this fragment also show an increase in the number of filopodia.</text>
</comment>
<comment type="subunit">
    <text evidence="17 20 23 24">Monomer. Component of the AGRN-LRP4 complex that consists of a tetramer of two AGRN-LRP4 heterodimers. Interacts (via the laminin G-like 3 domain) directly with LRP4; the interaction is required for activation of MUSK and clustering of AChR and requires the 'z8' insert present in the z(+8) isoforms. Interacts (N-terminal subunit) with TGF-beta family members, BMP2 and BMP4; the interactions inhibit the activity of these growth factors. Interacts with TGFB1; the interaction enhances the activity of TGFB1. Interacts with DAG1; the interaction is influenced by cell surface glycosaminoglycans and by alternative splicing of AGRN.</text>
</comment>
<comment type="interaction">
    <interactant intactId="EBI-2106099">
        <id>P25304</id>
    </interactant>
    <interactant intactId="EBI-2106160">
        <id>Q8VI56</id>
        <label>Lrp4</label>
    </interactant>
    <organismsDiffer>true</organismsDiffer>
    <experiments>3</experiments>
</comment>
<comment type="subcellular location">
    <subcellularLocation>
        <location evidence="23">Synapse</location>
    </subcellularLocation>
    <subcellularLocation>
        <location evidence="10">Cell membrane</location>
        <topology evidence="10">Single-pass type II membrane protein</topology>
    </subcellularLocation>
</comment>
<comment type="alternative products">
    <event type="alternative splicing"/>
    <isoform>
        <id>P25304-1</id>
        <name>1</name>
        <name>Transmembrane agrin</name>
        <name>TM-agrin</name>
        <name>Agrin z(+19)</name>
        <sequence type="displayed"/>
    </isoform>
    <isoform>
        <id>P25304-2</id>
        <name>2</name>
        <name>Agrin x(0)</name>
        <sequence type="described" ref="VSP_001365"/>
    </isoform>
    <isoform>
        <id>P25304-3</id>
        <name>3</name>
        <name>Agrin z(0)</name>
        <sequence type="described" ref="VSP_001366"/>
    </isoform>
    <isoform>
        <id>P25304-4</id>
        <name>4</name>
        <name>Agrin z(+11)</name>
        <sequence type="described" ref="VSP_001367"/>
    </isoform>
    <isoform>
        <id>P25304-5</id>
        <name>5</name>
        <name>Agrin z(+8)</name>
        <sequence type="described" ref="VSP_001368"/>
    </isoform>
    <isoform>
        <id>P25304-6</id>
        <name>6</name>
        <name>Agrin y(0)</name>
        <sequence type="described" ref="VSP_045759"/>
    </isoform>
    <text>Many isoforms exist depending on the occurrence and length of inserts at the x, y or z splice site. There are 4 'z' isoforms produced with inserts of 0, 8, 11 or 19 AA. Isoforms differ in their acetylcholine receptor clustering activity and tissue specificity. In addition, a secreted isoform may be produced by alternative usage of the first exon.</text>
</comment>
<comment type="tissue specificity">
    <text evidence="13 22">Embryonic nervous system and muscle.</text>
</comment>
<comment type="developmental stage">
    <text evidence="11 21">More abundant early in development. At 13 dpc, highly expressed in the developing nervous system. Isoform y(+4)z(0), containing the 'y' insert but no 'z' insert, is the most prevelant at this stage with pronounced expression in developing spinal and sympathetic ganglia. Isoforms with no 'y' insert (y0) localized to peripheral tissue. At 15 dpc, y(+4) isoform continues to be highly expressed in neural tissue predominantly in the spinal column and developing brain. The y(0) isoform is weakly expressed in capillaries and meninges and the y(0)(z0) in non-neural tissues, predominantly in epithelial cells lining the developing lung bronchioles and kidney tubules. Isoforms Z(+8) and z(+19) are highly expressed in ventral motor columns and facial nerve with weaker expression throughout spinal cord tissue. At later stages of development, isoform y(4)z(0) is the most prominent form in developing cortex, corpus striatum, hippocampus and cerebellum. Isoform y(0)z(0) expression is still detected in brain capillaries at stage P1. The z(+19) isoform is most highly expressed from 15 dpc to 18 dpc and declines slightly to P1. Isoforms y(1)4z(0) and y(+4)z(+8) are still expressed in adulthood, the former scattered throughout the spinal cord gray matter and, the latter, in motor neurons of the ventral spinal cord.</text>
</comment>
<comment type="domain">
    <text>Both laminin G-like 2 (G2) and laminin G-like 3 (G3) domains are required for alpha-dystroglycan binding. G3 domain is required for C-terminal heparin, heparan sulfate and sialic acid binding.</text>
</comment>
<comment type="PTM">
    <text evidence="14 22">Contains heparan and chondroitin sulfate chains and alpha-dystroglycan as well as N-linked and O-linked oligosaccharides. Glycosaminoglycans (GAGs), present in the agrin N-terminal 110 kDa fragment, are required for induction of filopodia in hippocampal neurons. The first cluster (Gly/Ser-rich) for GAG attachment contains heparan sulfate (HS) chains and the second cluster (Ser/Thr-rich), contains chondroitin sulfate (CS) chains. Heparin and heparin sulfate binding in the G3 doamin is independent of calcium ions. Binds heparin with a stoichiometry of 2:1. Binds sialic acid with a stoichiometry of 1:1 and binding requires calcium ions.</text>
</comment>
<comment type="PTM">
    <text evidence="12 19">At synaptic junctions, cleaved at two conserved sites, alpha and beta, by neurotrypsin. Cleavage at the alpha-site produces the agrin N-terminal 110-kDa subunit and the agrin C-terminal 110-kDa subunit. Further cleavage of agrin C-terminal 110-kDa subunit at the beta site produces the C-terminal fragments, agrin C-terminal 90 kDa fragment and agrin C-terminal 22 kDa fragment. Excessive cleavage at the beta-site releases large amounts of the agrin C-terminal 22 kDa fragment leading to destabilization at the neuromuscular junction (NMJ).</text>
</comment>
<reference key="1">
    <citation type="journal article" date="1991" name="Neuron">
        <title>Structure and expression of a rat agrin.</title>
        <authorList>
            <person name="Rupp F."/>
            <person name="Payan D.G."/>
            <person name="Magill-Solc C."/>
            <person name="Cowan D.M."/>
            <person name="Scheller R.H."/>
        </authorList>
    </citation>
    <scope>NUCLEOTIDE SEQUENCE [MRNA] (ISOFORM 3)</scope>
    <scope>TISSUE SPECIFICITY</scope>
    <source>
        <tissue>Embryonic spinal cord</tissue>
    </source>
</reference>
<reference key="2">
    <citation type="journal article" date="1992" name="J. Neurosci.">
        <title>Structure and chromosomal localization of the mammalian agrin gene.</title>
        <authorList>
            <person name="Rupp F."/>
            <person name="Oezcelik T."/>
            <person name="Linial M."/>
            <person name="Peterson K."/>
            <person name="Francke U."/>
            <person name="Scheller R.H."/>
        </authorList>
    </citation>
    <scope>NUCLEOTIDE SEQUENCE [MRNA] (ISOFORMS 1; 2; 3; 4 AND 5)</scope>
    <scope>DEVELOPMENTAL STAGE</scope>
</reference>
<reference key="3">
    <citation type="journal article" date="2001" name="Mol. Cell. Neurosci.">
        <title>An alternative amino-terminus expressed in the central nervous system converts agrin to a type II transmembrane protein.</title>
        <authorList>
            <person name="Neumann F.R."/>
            <person name="Bittcher G."/>
            <person name="Annies M."/>
            <person name="Schumacher B."/>
            <person name="Kroger S."/>
            <person name="Ruegg M.A."/>
        </authorList>
    </citation>
    <scope>NUCLEOTIDE SEQUENCE [MRNA] OF 1-60 (ISOFORM 1)</scope>
    <scope>ALTERNATIVE PROMOTER USAGE</scope>
    <scope>SUBCELLULAR LOCATION</scope>
</reference>
<reference key="4">
    <citation type="journal article" date="1993" name="Neuron">
        <title>The ability of agrin to cluster AChRs depends on alternative splicing and on cell surface proteoglycans.</title>
        <authorList>
            <person name="Ferns M.J."/>
            <person name="Campanelli J.T."/>
            <person name="Hoch W."/>
            <person name="Scheller R.H."/>
            <person name="Hall Z."/>
        </authorList>
    </citation>
    <scope>ALTERNATING SPLICING</scope>
    <scope>TISSUE SPECIFICITY</scope>
    <scope>GLYCOSYLATION</scope>
    <scope>FUNCTION</scope>
</reference>
<reference key="5">
    <citation type="journal article" date="1995" name="J. Neurosci.">
        <title>Tissue- and age-specific expression patterns of alternatively spliced agrin mRNA transcripts in embryonic rat suggest novel developmental roles.</title>
        <authorList>
            <person name="Stone D.M."/>
            <person name="Nikolics K."/>
        </authorList>
    </citation>
    <scope>ALTERNATIVE SPLICING</scope>
    <scope>DEVELOPMENTAL STAGE</scope>
</reference>
<reference key="6">
    <citation type="journal article" date="1996" name="Cell">
        <title>Agrin acts via a MuSK receptor complex.</title>
        <authorList>
            <person name="Glass D.J."/>
            <person name="Bowen D.C."/>
            <person name="Stitt T.N."/>
            <person name="Radziejewski C."/>
            <person name="Bruno J."/>
            <person name="Ryan T.E."/>
            <person name="Gies D.R."/>
            <person name="Shah S."/>
            <person name="Mattsson K."/>
            <person name="Burden S.J."/>
            <person name="DiStefano P.S."/>
            <person name="Valenzuela D.M."/>
            <person name="DeChiara T.M."/>
            <person name="Yancopoulos G.D."/>
        </authorList>
    </citation>
    <scope>FUNCTION IN NEUROMUSCULAR JUNCTION DEVELOPMENT</scope>
    <scope>SUBCELLULAR LOCATION</scope>
    <scope>FUNCTION IN PHOSPHORYLATION OF MUSK</scope>
    <scope>INTERACTION WITH LRP4</scope>
</reference>
<reference key="7">
    <citation type="journal article" date="1996" name="Proc. Natl. Acad. Sci. U.S.A.">
        <title>Alternative splicing of agrin regulates its binding to heparin, alpha-dystroglycan, and the cell surface.</title>
        <authorList>
            <person name="O'Toole J.J."/>
            <person name="Deyst K.A."/>
            <person name="Bowe M.A."/>
            <person name="Nastuk M.A."/>
            <person name="McKechnie B.A."/>
            <person name="Fallon J.R."/>
        </authorList>
    </citation>
    <scope>ALTERNATIVE SPLICING</scope>
    <scope>INTERACTION WITH DAG1</scope>
    <scope>HEPARIN BINDING</scope>
    <scope>FUNCTION</scope>
</reference>
<reference key="8">
    <citation type="journal article" date="2007" name="FASEB J.">
        <title>Specific cleavage of agrin by neurotrypsin, a synaptic protease linked to mental retardation.</title>
        <authorList>
            <person name="Reif R."/>
            <person name="Sales S."/>
            <person name="Hettwer S."/>
            <person name="Dreier B."/>
            <person name="Gisler C."/>
            <person name="Wolfel J."/>
            <person name="Luscher D."/>
            <person name="Zurlinden A."/>
            <person name="Stephan A."/>
            <person name="Ahmed S."/>
            <person name="Baici A."/>
            <person name="Ledermann B."/>
            <person name="Kunz B."/>
            <person name="Sonderegger P."/>
        </authorList>
    </citation>
    <scope>PROTEOLYTIC PROCESSING</scope>
    <scope>IDENTIFICATION OF PROTEOLYTICALLY CLEAVED PRODUCTS BY MASS SPECTROMETRY</scope>
    <scope>MUTAGENESIS OF PRO-991; PRO-992; ILE-993; GLU-994; ARG-995; LEU-1751; VAL-1752; GLU-1753; LYS-1754; SER-1755; VAL-1756 AND GLY-1757</scope>
</reference>
<reference key="9">
    <citation type="journal article" date="2008" name="Mol. Cell. Neurosci.">
        <title>O-fucosylation of muscle agrin determines its ability to cluster acetylcholine receptors.</title>
        <authorList>
            <person name="Kim M.L."/>
            <person name="Chandrasekharan K."/>
            <person name="Glass M."/>
            <person name="Shi S."/>
            <person name="Stahl M.C."/>
            <person name="Kaspar B."/>
            <person name="Stanley P."/>
            <person name="Martin P.T."/>
        </authorList>
    </citation>
    <scope>GLYCOSYLATION AT SER-1726</scope>
    <scope>FUNCTION</scope>
    <scope>MUTAGENESIS OF SER-1726</scope>
</reference>
<reference key="10">
    <citation type="journal article" date="2009" name="Neuroscience">
        <title>Transmembrane agrin regulates dendritic filopodia and synapse formation in mature hippocampal neuron cultures.</title>
        <authorList>
            <person name="McCroskery S."/>
            <person name="Bailey A."/>
            <person name="Lin L."/>
            <person name="Daniels M.P."/>
        </authorList>
    </citation>
    <scope>FUNCTION</scope>
</reference>
<reference key="11">
    <citation type="journal article" date="2010" name="Exp. Cell Res.">
        <title>Induction of filopodia-like protrusions by transmembrane agrin: role of agrin glycosaminoglycan chains and Rho-family GTPases.</title>
        <authorList>
            <person name="Lin L."/>
            <person name="McCroskery S."/>
            <person name="Ross J.M."/>
            <person name="Chak Y."/>
            <person name="Neuhuber B."/>
            <person name="Daniels M.P."/>
        </authorList>
    </citation>
    <scope>FUNCTION</scope>
    <scope>HEPARAN SULFATE BINDING</scope>
    <scope>CHONDROITIN SULFATE BINDING</scope>
</reference>
<reference key="12">
    <citation type="journal article" date="2010" name="J. Biol. Chem.">
        <title>Asparagine of z8 insert is critical for the affinity, conformation, and acetylcholine receptor-clustering activity of neural agrin.</title>
        <authorList>
            <person name="Tseng C.N."/>
            <person name="Zhang L."/>
            <person name="Wu S.L."/>
            <person name="Wang W.F."/>
            <person name="Wang Z.Z."/>
            <person name="Cascio M."/>
        </authorList>
    </citation>
    <scope>FUNCTION</scope>
    <scope>CALCIUM-BINDING</scope>
    <scope>MUTAGENESIS OF GLU-1780; LEU-1781; THR-1782; ASN-1783; GLU-1784; ILE-1785; PRO-1786; ASP-1831 AND ASP-1900</scope>
</reference>
<reference key="13">
    <citation type="journal article" date="2010" name="J. Cell Sci.">
        <title>Specific proteolytic cleavage of agrin regulates maturation of the neuromuscular junction.</title>
        <authorList>
            <person name="Bolliger M.F."/>
            <person name="Zurlinden A."/>
            <person name="Luscher D."/>
            <person name="Butikofer L."/>
            <person name="Shakhova O."/>
            <person name="Francolini M."/>
            <person name="Kozlov S.V."/>
            <person name="Cinelli P."/>
            <person name="Stephan A."/>
            <person name="Kistler A.D."/>
            <person name="Rulicke T."/>
            <person name="Pelczar P."/>
            <person name="Ledermann B."/>
            <person name="Fumagalli G."/>
            <person name="Gloor S.M."/>
            <person name="Kunz B."/>
            <person name="Sonderegger P."/>
        </authorList>
    </citation>
    <scope>PROTEOLYTIC PROCESSING</scope>
</reference>
<reference key="14">
    <citation type="journal article" date="2010" name="PLoS ONE">
        <title>Agrin binds BMP2, BMP4 and TGFbeta1.</title>
        <authorList>
            <person name="Banyai L."/>
            <person name="Sonderegger P."/>
            <person name="Patthy L."/>
        </authorList>
    </citation>
    <scope>INTERACTION WITH BMP2; BMP4 AND TGFB1</scope>
    <scope>FUNCTION</scope>
</reference>
<reference evidence="28 29" key="15">
    <citation type="journal article" date="2012" name="Genes Dev.">
        <title>Structural basis of agrin-LRP4-MuSK signaling.</title>
        <authorList>
            <person name="Zong Y."/>
            <person name="Zhang B."/>
            <person name="Gu S."/>
            <person name="Lee K."/>
            <person name="Zhou J."/>
            <person name="Yao G."/>
            <person name="Figueiredo D."/>
            <person name="Perry K."/>
            <person name="Mei L."/>
            <person name="Jin R."/>
        </authorList>
    </citation>
    <scope>X-RAY CRYSTALLOGRAPHY (2.85 ANGSTROMS) OF 1759-1959 IN COMPLEX WITH LRP4 AND CALCIUM</scope>
    <scope>SUBUNIT</scope>
    <scope>MUTAGENESIS OF ASN-1783; ILE-1785; HIS-1806; ARG-1876 AND HIS-1938</scope>
</reference>
<organism>
    <name type="scientific">Rattus norvegicus</name>
    <name type="common">Rat</name>
    <dbReference type="NCBI Taxonomy" id="10116"/>
    <lineage>
        <taxon>Eukaryota</taxon>
        <taxon>Metazoa</taxon>
        <taxon>Chordata</taxon>
        <taxon>Craniata</taxon>
        <taxon>Vertebrata</taxon>
        <taxon>Euteleostomi</taxon>
        <taxon>Mammalia</taxon>
        <taxon>Eutheria</taxon>
        <taxon>Euarchontoglires</taxon>
        <taxon>Glires</taxon>
        <taxon>Rodentia</taxon>
        <taxon>Myomorpha</taxon>
        <taxon>Muroidea</taxon>
        <taxon>Muridae</taxon>
        <taxon>Murinae</taxon>
        <taxon>Rattus</taxon>
    </lineage>
</organism>
<gene>
    <name type="primary">Agrn</name>
    <name type="synonym">Agrin</name>
</gene>
<keyword id="KW-0002">3D-structure</keyword>
<keyword id="KW-0025">Alternative splicing</keyword>
<keyword id="KW-0106">Calcium</keyword>
<keyword id="KW-1003">Cell membrane</keyword>
<keyword id="KW-0217">Developmental protein</keyword>
<keyword id="KW-0221">Differentiation</keyword>
<keyword id="KW-1015">Disulfide bond</keyword>
<keyword id="KW-0245">EGF-like domain</keyword>
<keyword id="KW-0325">Glycoprotein</keyword>
<keyword id="KW-0357">Heparan sulfate</keyword>
<keyword id="KW-0424">Laminin EGF-like domain</keyword>
<keyword id="KW-0472">Membrane</keyword>
<keyword id="KW-0479">Metal-binding</keyword>
<keyword id="KW-0597">Phosphoprotein</keyword>
<keyword id="KW-0654">Proteoglycan</keyword>
<keyword id="KW-1185">Reference proteome</keyword>
<keyword id="KW-0677">Repeat</keyword>
<keyword id="KW-0735">Signal-anchor</keyword>
<keyword id="KW-0770">Synapse</keyword>
<keyword id="KW-0812">Transmembrane</keyword>
<keyword id="KW-1133">Transmembrane helix</keyword>
<dbReference type="EMBL" id="M64780">
    <property type="protein sequence ID" value="AAA40702.1"/>
    <property type="molecule type" value="mRNA"/>
</dbReference>
<dbReference type="EMBL" id="M64780">
    <property type="protein sequence ID" value="AAA40703.1"/>
    <property type="molecule type" value="mRNA"/>
</dbReference>
<dbReference type="EMBL" id="S44194">
    <property type="protein sequence ID" value="AAB23326.1"/>
    <property type="molecule type" value="mRNA"/>
</dbReference>
<dbReference type="PIR" id="JH0399">
    <property type="entry name" value="AGRT"/>
</dbReference>
<dbReference type="RefSeq" id="NP_786930.1">
    <property type="nucleotide sequence ID" value="NM_175754.1"/>
</dbReference>
<dbReference type="PDB" id="3V64">
    <property type="method" value="X-ray"/>
    <property type="resolution" value="2.85 A"/>
    <property type="chains" value="A/B=1759-1959"/>
</dbReference>
<dbReference type="PDB" id="3V65">
    <property type="method" value="X-ray"/>
    <property type="resolution" value="3.30 A"/>
    <property type="chains" value="A/C=1759-1959"/>
</dbReference>
<dbReference type="PDBsum" id="3V64"/>
<dbReference type="PDBsum" id="3V65"/>
<dbReference type="SMR" id="P25304"/>
<dbReference type="FunCoup" id="P25304">
    <property type="interactions" value="387"/>
</dbReference>
<dbReference type="IntAct" id="P25304">
    <property type="interactions" value="4"/>
</dbReference>
<dbReference type="STRING" id="10116.ENSRNOP00000050623"/>
<dbReference type="CarbonylDB" id="P25304"/>
<dbReference type="GlyCosmos" id="P25304">
    <property type="glycosylation" value="5 sites, No reported glycans"/>
</dbReference>
<dbReference type="GlyGen" id="P25304">
    <property type="glycosylation" value="10 sites"/>
</dbReference>
<dbReference type="iPTMnet" id="P25304"/>
<dbReference type="PhosphoSitePlus" id="P25304"/>
<dbReference type="SwissPalm" id="P25304"/>
<dbReference type="PaxDb" id="10116-ENSRNOP00000050623"/>
<dbReference type="GeneID" id="25592"/>
<dbReference type="KEGG" id="rno:25592"/>
<dbReference type="AGR" id="RGD:2067"/>
<dbReference type="CTD" id="375790"/>
<dbReference type="RGD" id="2067">
    <property type="gene designation" value="Agrn"/>
</dbReference>
<dbReference type="eggNOG" id="KOG3509">
    <property type="taxonomic scope" value="Eukaryota"/>
</dbReference>
<dbReference type="InParanoid" id="P25304"/>
<dbReference type="PhylomeDB" id="P25304"/>
<dbReference type="Reactome" id="R-RNO-1971475">
    <property type="pathway name" value="A tetrasaccharide linker sequence is required for GAG synthesis"/>
</dbReference>
<dbReference type="Reactome" id="R-RNO-2022928">
    <property type="pathway name" value="HS-GAG biosynthesis"/>
</dbReference>
<dbReference type="Reactome" id="R-RNO-2024096">
    <property type="pathway name" value="HS-GAG degradation"/>
</dbReference>
<dbReference type="Reactome" id="R-RNO-3000178">
    <property type="pathway name" value="ECM proteoglycans"/>
</dbReference>
<dbReference type="Reactome" id="R-RNO-975634">
    <property type="pathway name" value="Retinoid metabolism and transport"/>
</dbReference>
<dbReference type="Reactome" id="R-RNO-9913351">
    <property type="pathway name" value="Formation of the dystrophin-glycoprotein complex (DGC)"/>
</dbReference>
<dbReference type="EvolutionaryTrace" id="P25304"/>
<dbReference type="PRO" id="PR:P25304"/>
<dbReference type="Proteomes" id="UP000002494">
    <property type="component" value="Unplaced"/>
</dbReference>
<dbReference type="GO" id="GO:0044295">
    <property type="term" value="C:axonal growth cone"/>
    <property type="evidence" value="ECO:0000314"/>
    <property type="project" value="RGD"/>
</dbReference>
<dbReference type="GO" id="GO:0005604">
    <property type="term" value="C:basement membrane"/>
    <property type="evidence" value="ECO:0000314"/>
    <property type="project" value="RGD"/>
</dbReference>
<dbReference type="GO" id="GO:0009986">
    <property type="term" value="C:cell surface"/>
    <property type="evidence" value="ECO:0000266"/>
    <property type="project" value="RGD"/>
</dbReference>
<dbReference type="GO" id="GO:0005576">
    <property type="term" value="C:extracellular region"/>
    <property type="evidence" value="ECO:0000304"/>
    <property type="project" value="Reactome"/>
</dbReference>
<dbReference type="GO" id="GO:0005615">
    <property type="term" value="C:extracellular space"/>
    <property type="evidence" value="ECO:0000266"/>
    <property type="project" value="RGD"/>
</dbReference>
<dbReference type="GO" id="GO:0098978">
    <property type="term" value="C:glutamatergic synapse"/>
    <property type="evidence" value="ECO:0000314"/>
    <property type="project" value="SynGO"/>
</dbReference>
<dbReference type="GO" id="GO:0042383">
    <property type="term" value="C:sarcolemma"/>
    <property type="evidence" value="ECO:0000266"/>
    <property type="project" value="RGD"/>
</dbReference>
<dbReference type="GO" id="GO:0045202">
    <property type="term" value="C:synapse"/>
    <property type="evidence" value="ECO:0000314"/>
    <property type="project" value="UniProtKB"/>
</dbReference>
<dbReference type="GO" id="GO:0030548">
    <property type="term" value="F:acetylcholine receptor regulator activity"/>
    <property type="evidence" value="ECO:0000266"/>
    <property type="project" value="RGD"/>
</dbReference>
<dbReference type="GO" id="GO:0042030">
    <property type="term" value="F:ATPase inhibitor activity"/>
    <property type="evidence" value="ECO:0000266"/>
    <property type="project" value="RGD"/>
</dbReference>
<dbReference type="GO" id="GO:0036122">
    <property type="term" value="F:BMP binding"/>
    <property type="evidence" value="ECO:0000353"/>
    <property type="project" value="RGD"/>
</dbReference>
<dbReference type="GO" id="GO:0005509">
    <property type="term" value="F:calcium ion binding"/>
    <property type="evidence" value="ECO:0000314"/>
    <property type="project" value="UniProtKB"/>
</dbReference>
<dbReference type="GO" id="GO:0035374">
    <property type="term" value="F:chondroitin sulfate binding"/>
    <property type="evidence" value="ECO:0000250"/>
    <property type="project" value="UniProtKB"/>
</dbReference>
<dbReference type="GO" id="GO:0002162">
    <property type="term" value="F:dystroglycan binding"/>
    <property type="evidence" value="ECO:0000314"/>
    <property type="project" value="UniProtKB"/>
</dbReference>
<dbReference type="GO" id="GO:0043395">
    <property type="term" value="F:heparan sulfate proteoglycan binding"/>
    <property type="evidence" value="ECO:0000250"/>
    <property type="project" value="UniProtKB"/>
</dbReference>
<dbReference type="GO" id="GO:0048018">
    <property type="term" value="F:receptor ligand activity"/>
    <property type="evidence" value="ECO:0000266"/>
    <property type="project" value="RGD"/>
</dbReference>
<dbReference type="GO" id="GO:0033691">
    <property type="term" value="F:sialic acid binding"/>
    <property type="evidence" value="ECO:0000250"/>
    <property type="project" value="UniProtKB"/>
</dbReference>
<dbReference type="GO" id="GO:0050431">
    <property type="term" value="F:transforming growth factor beta binding"/>
    <property type="evidence" value="ECO:0000353"/>
    <property type="project" value="RGD"/>
</dbReference>
<dbReference type="GO" id="GO:0044325">
    <property type="term" value="F:transmembrane transporter binding"/>
    <property type="evidence" value="ECO:0000266"/>
    <property type="project" value="RGD"/>
</dbReference>
<dbReference type="GO" id="GO:0030154">
    <property type="term" value="P:cell differentiation"/>
    <property type="evidence" value="ECO:0007669"/>
    <property type="project" value="UniProtKB-KW"/>
</dbReference>
<dbReference type="GO" id="GO:0007268">
    <property type="term" value="P:chemical synaptic transmission"/>
    <property type="evidence" value="ECO:0000315"/>
    <property type="project" value="RGD"/>
</dbReference>
<dbReference type="GO" id="GO:0007623">
    <property type="term" value="P:circadian rhythm"/>
    <property type="evidence" value="ECO:0000266"/>
    <property type="project" value="RGD"/>
</dbReference>
<dbReference type="GO" id="GO:0007167">
    <property type="term" value="P:enzyme-linked receptor protein signaling pathway"/>
    <property type="evidence" value="ECO:0000266"/>
    <property type="project" value="RGD"/>
</dbReference>
<dbReference type="GO" id="GO:0097049">
    <property type="term" value="P:motor neuron apoptotic process"/>
    <property type="evidence" value="ECO:0000266"/>
    <property type="project" value="RGD"/>
</dbReference>
<dbReference type="GO" id="GO:1903277">
    <property type="term" value="P:negative regulation of sodium ion export across plasma membrane"/>
    <property type="evidence" value="ECO:0000266"/>
    <property type="project" value="RGD"/>
</dbReference>
<dbReference type="GO" id="GO:0007528">
    <property type="term" value="P:neuromuscular junction development"/>
    <property type="evidence" value="ECO:0000266"/>
    <property type="project" value="RGD"/>
</dbReference>
<dbReference type="GO" id="GO:0007009">
    <property type="term" value="P:plasma membrane organization"/>
    <property type="evidence" value="ECO:0000266"/>
    <property type="project" value="RGD"/>
</dbReference>
<dbReference type="GO" id="GO:0051491">
    <property type="term" value="P:positive regulation of filopodium assembly"/>
    <property type="evidence" value="ECO:0000314"/>
    <property type="project" value="UniProtKB"/>
</dbReference>
<dbReference type="GO" id="GO:0043547">
    <property type="term" value="P:positive regulation of GTPase activity"/>
    <property type="evidence" value="ECO:0000314"/>
    <property type="project" value="UniProtKB"/>
</dbReference>
<dbReference type="GO" id="GO:2000673">
    <property type="term" value="P:positive regulation of motor neuron apoptotic process"/>
    <property type="evidence" value="ECO:0000266"/>
    <property type="project" value="RGD"/>
</dbReference>
<dbReference type="GO" id="GO:0050731">
    <property type="term" value="P:positive regulation of peptidyl-tyrosine phosphorylation"/>
    <property type="evidence" value="ECO:0000314"/>
    <property type="project" value="UniProtKB"/>
</dbReference>
<dbReference type="GO" id="GO:0001934">
    <property type="term" value="P:positive regulation of protein phosphorylation"/>
    <property type="evidence" value="ECO:0000315"/>
    <property type="project" value="UniProtKB"/>
</dbReference>
<dbReference type="GO" id="GO:0035022">
    <property type="term" value="P:positive regulation of Rac protein signal transduction"/>
    <property type="evidence" value="ECO:0000266"/>
    <property type="project" value="RGD"/>
</dbReference>
<dbReference type="GO" id="GO:1904395">
    <property type="term" value="P:positive regulation of skeletal muscle acetylcholine-gated channel clustering"/>
    <property type="evidence" value="ECO:0000266"/>
    <property type="project" value="RGD"/>
</dbReference>
<dbReference type="GO" id="GO:0045887">
    <property type="term" value="P:positive regulation of synaptic assembly at neuromuscular junction"/>
    <property type="evidence" value="ECO:0000250"/>
    <property type="project" value="UniProtKB"/>
</dbReference>
<dbReference type="GO" id="GO:0045944">
    <property type="term" value="P:positive regulation of transcription by RNA polymerase II"/>
    <property type="evidence" value="ECO:0000314"/>
    <property type="project" value="UniProtKB"/>
</dbReference>
<dbReference type="GO" id="GO:0015031">
    <property type="term" value="P:protein transport"/>
    <property type="evidence" value="ECO:0000266"/>
    <property type="project" value="RGD"/>
</dbReference>
<dbReference type="GO" id="GO:0043113">
    <property type="term" value="P:receptor clustering"/>
    <property type="evidence" value="ECO:0000314"/>
    <property type="project" value="MGI"/>
</dbReference>
<dbReference type="GO" id="GO:1902667">
    <property type="term" value="P:regulation of axon guidance"/>
    <property type="evidence" value="ECO:0000314"/>
    <property type="project" value="RGD"/>
</dbReference>
<dbReference type="GO" id="GO:0086036">
    <property type="term" value="P:regulation of cardiac muscle cell membrane potential"/>
    <property type="evidence" value="ECO:0000266"/>
    <property type="project" value="RGD"/>
</dbReference>
<dbReference type="GO" id="GO:0055117">
    <property type="term" value="P:regulation of cardiac muscle contraction"/>
    <property type="evidence" value="ECO:0000266"/>
    <property type="project" value="RGD"/>
</dbReference>
<dbReference type="GO" id="GO:0070507">
    <property type="term" value="P:regulation of microtubule cytoskeleton organization"/>
    <property type="evidence" value="ECO:0000314"/>
    <property type="project" value="RGD"/>
</dbReference>
<dbReference type="GO" id="GO:0001932">
    <property type="term" value="P:regulation of protein phosphorylation"/>
    <property type="evidence" value="ECO:0000314"/>
    <property type="project" value="UniProtKB"/>
</dbReference>
<dbReference type="GO" id="GO:0050807">
    <property type="term" value="P:regulation of synapse organization"/>
    <property type="evidence" value="ECO:0000314"/>
    <property type="project" value="SynGO"/>
</dbReference>
<dbReference type="GO" id="GO:0060025">
    <property type="term" value="P:regulation of synaptic activity"/>
    <property type="evidence" value="ECO:0000266"/>
    <property type="project" value="RGD"/>
</dbReference>
<dbReference type="GO" id="GO:0071340">
    <property type="term" value="P:skeletal muscle acetylcholine-gated channel clustering"/>
    <property type="evidence" value="ECO:0000314"/>
    <property type="project" value="UniProtKB"/>
</dbReference>
<dbReference type="GO" id="GO:0007416">
    <property type="term" value="P:synapse assembly"/>
    <property type="evidence" value="ECO:0000315"/>
    <property type="project" value="RGD"/>
</dbReference>
<dbReference type="CDD" id="cd00054">
    <property type="entry name" value="EGF_CA"/>
    <property type="match status" value="1"/>
</dbReference>
<dbReference type="CDD" id="cd00055">
    <property type="entry name" value="EGF_Lam"/>
    <property type="match status" value="2"/>
</dbReference>
<dbReference type="CDD" id="cd00104">
    <property type="entry name" value="KAZAL_FS"/>
    <property type="match status" value="9"/>
</dbReference>
<dbReference type="CDD" id="cd00110">
    <property type="entry name" value="LamG"/>
    <property type="match status" value="3"/>
</dbReference>
<dbReference type="FunFam" id="3.30.60.30:FF:000013">
    <property type="entry name" value="Agrin"/>
    <property type="match status" value="1"/>
</dbReference>
<dbReference type="FunFam" id="3.30.60.30:FF:000016">
    <property type="entry name" value="Agrin"/>
    <property type="match status" value="1"/>
</dbReference>
<dbReference type="FunFam" id="3.30.60.30:FF:000075">
    <property type="entry name" value="Agrin"/>
    <property type="match status" value="1"/>
</dbReference>
<dbReference type="FunFam" id="3.30.60.30:FF:000039">
    <property type="entry name" value="Agrin isoform B"/>
    <property type="match status" value="1"/>
</dbReference>
<dbReference type="FunFam" id="2.10.25.10:FF:000228">
    <property type="entry name" value="agrin isoform X1"/>
    <property type="match status" value="1"/>
</dbReference>
<dbReference type="FunFam" id="3.30.60.30:FF:000041">
    <property type="entry name" value="agrin isoform X5"/>
    <property type="match status" value="1"/>
</dbReference>
<dbReference type="FunFam" id="2.10.25.10:FF:000095">
    <property type="entry name" value="Notch, isoform B"/>
    <property type="match status" value="1"/>
</dbReference>
<dbReference type="FunFam" id="2.60.120.200:FF:000031">
    <property type="entry name" value="NtA agrin"/>
    <property type="match status" value="1"/>
</dbReference>
<dbReference type="FunFam" id="3.30.60.30:FF:000019">
    <property type="entry name" value="NtA agrin"/>
    <property type="match status" value="1"/>
</dbReference>
<dbReference type="FunFam" id="3.30.70.960:FF:000001">
    <property type="entry name" value="NtA agrin"/>
    <property type="match status" value="1"/>
</dbReference>
<dbReference type="FunFam" id="2.10.25.10:FF:000134">
    <property type="entry name" value="Transmembrane agrin"/>
    <property type="match status" value="1"/>
</dbReference>
<dbReference type="FunFam" id="2.10.25.10:FF:000140">
    <property type="entry name" value="Transmembrane agrin"/>
    <property type="match status" value="1"/>
</dbReference>
<dbReference type="FunFam" id="2.60.120.200:FF:000027">
    <property type="entry name" value="Transmembrane agrin"/>
    <property type="match status" value="1"/>
</dbReference>
<dbReference type="FunFam" id="2.60.120.200:FF:000045">
    <property type="entry name" value="Transmembrane agrin"/>
    <property type="match status" value="1"/>
</dbReference>
<dbReference type="FunFam" id="3.30.60.30:FF:000008">
    <property type="entry name" value="Transmembrane agrin"/>
    <property type="match status" value="1"/>
</dbReference>
<dbReference type="FunFam" id="3.30.60.30:FF:000015">
    <property type="entry name" value="Transmembrane agrin"/>
    <property type="match status" value="1"/>
</dbReference>
<dbReference type="FunFam" id="3.30.60.30:FF:000022">
    <property type="entry name" value="Transmembrane agrin"/>
    <property type="match status" value="1"/>
</dbReference>
<dbReference type="Gene3D" id="2.60.120.200">
    <property type="match status" value="3"/>
</dbReference>
<dbReference type="Gene3D" id="3.30.60.30">
    <property type="match status" value="9"/>
</dbReference>
<dbReference type="Gene3D" id="2.10.25.10">
    <property type="entry name" value="Laminin"/>
    <property type="match status" value="6"/>
</dbReference>
<dbReference type="Gene3D" id="3.30.70.960">
    <property type="entry name" value="SEA domain"/>
    <property type="match status" value="1"/>
</dbReference>
<dbReference type="InterPro" id="IPR013320">
    <property type="entry name" value="ConA-like_dom_sf"/>
</dbReference>
<dbReference type="InterPro" id="IPR001881">
    <property type="entry name" value="EGF-like_Ca-bd_dom"/>
</dbReference>
<dbReference type="InterPro" id="IPR000742">
    <property type="entry name" value="EGF-like_dom"/>
</dbReference>
<dbReference type="InterPro" id="IPR003884">
    <property type="entry name" value="FacI_MAC"/>
</dbReference>
<dbReference type="InterPro" id="IPR003645">
    <property type="entry name" value="Fol_N"/>
</dbReference>
<dbReference type="InterPro" id="IPR002350">
    <property type="entry name" value="Kazal_dom"/>
</dbReference>
<dbReference type="InterPro" id="IPR036058">
    <property type="entry name" value="Kazal_dom_sf"/>
</dbReference>
<dbReference type="InterPro" id="IPR001791">
    <property type="entry name" value="Laminin_G"/>
</dbReference>
<dbReference type="InterPro" id="IPR002049">
    <property type="entry name" value="LE_dom"/>
</dbReference>
<dbReference type="InterPro" id="IPR050372">
    <property type="entry name" value="Neurexin-related_CASP"/>
</dbReference>
<dbReference type="InterPro" id="IPR000082">
    <property type="entry name" value="SEA_dom"/>
</dbReference>
<dbReference type="InterPro" id="IPR036364">
    <property type="entry name" value="SEA_dom_sf"/>
</dbReference>
<dbReference type="PANTHER" id="PTHR15036:SF83">
    <property type="entry name" value="AGRIN"/>
    <property type="match status" value="1"/>
</dbReference>
<dbReference type="PANTHER" id="PTHR15036">
    <property type="entry name" value="PIKACHURIN-LIKE PROTEIN"/>
    <property type="match status" value="1"/>
</dbReference>
<dbReference type="Pfam" id="PF00008">
    <property type="entry name" value="EGF"/>
    <property type="match status" value="3"/>
</dbReference>
<dbReference type="Pfam" id="PF00053">
    <property type="entry name" value="EGF_laminin"/>
    <property type="match status" value="2"/>
</dbReference>
<dbReference type="Pfam" id="PF00050">
    <property type="entry name" value="Kazal_1"/>
    <property type="match status" value="1"/>
</dbReference>
<dbReference type="Pfam" id="PF07648">
    <property type="entry name" value="Kazal_2"/>
    <property type="match status" value="8"/>
</dbReference>
<dbReference type="Pfam" id="PF00054">
    <property type="entry name" value="Laminin_G_1"/>
    <property type="match status" value="3"/>
</dbReference>
<dbReference type="Pfam" id="PF01390">
    <property type="entry name" value="SEA"/>
    <property type="match status" value="1"/>
</dbReference>
<dbReference type="PRINTS" id="PR00011">
    <property type="entry name" value="EGFLAMININ"/>
</dbReference>
<dbReference type="SMART" id="SM00181">
    <property type="entry name" value="EGF"/>
    <property type="match status" value="6"/>
</dbReference>
<dbReference type="SMART" id="SM00179">
    <property type="entry name" value="EGF_CA"/>
    <property type="match status" value="3"/>
</dbReference>
<dbReference type="SMART" id="SM00180">
    <property type="entry name" value="EGF_Lam"/>
    <property type="match status" value="2"/>
</dbReference>
<dbReference type="SMART" id="SM00057">
    <property type="entry name" value="FIMAC"/>
    <property type="match status" value="3"/>
</dbReference>
<dbReference type="SMART" id="SM00274">
    <property type="entry name" value="FOLN"/>
    <property type="match status" value="5"/>
</dbReference>
<dbReference type="SMART" id="SM00280">
    <property type="entry name" value="KAZAL"/>
    <property type="match status" value="9"/>
</dbReference>
<dbReference type="SMART" id="SM00282">
    <property type="entry name" value="LamG"/>
    <property type="match status" value="3"/>
</dbReference>
<dbReference type="SMART" id="SM00200">
    <property type="entry name" value="SEA"/>
    <property type="match status" value="1"/>
</dbReference>
<dbReference type="SUPFAM" id="SSF49899">
    <property type="entry name" value="Concanavalin A-like lectins/glucanases"/>
    <property type="match status" value="3"/>
</dbReference>
<dbReference type="SUPFAM" id="SSF57196">
    <property type="entry name" value="EGF/Laminin"/>
    <property type="match status" value="3"/>
</dbReference>
<dbReference type="SUPFAM" id="SSF100895">
    <property type="entry name" value="Kazal-type serine protease inhibitors"/>
    <property type="match status" value="9"/>
</dbReference>
<dbReference type="SUPFAM" id="SSF82671">
    <property type="entry name" value="SEA domain"/>
    <property type="match status" value="1"/>
</dbReference>
<dbReference type="PROSITE" id="PS00022">
    <property type="entry name" value="EGF_1"/>
    <property type="match status" value="6"/>
</dbReference>
<dbReference type="PROSITE" id="PS01186">
    <property type="entry name" value="EGF_2"/>
    <property type="match status" value="1"/>
</dbReference>
<dbReference type="PROSITE" id="PS50026">
    <property type="entry name" value="EGF_3"/>
    <property type="match status" value="4"/>
</dbReference>
<dbReference type="PROSITE" id="PS01248">
    <property type="entry name" value="EGF_LAM_1"/>
    <property type="match status" value="1"/>
</dbReference>
<dbReference type="PROSITE" id="PS50027">
    <property type="entry name" value="EGF_LAM_2"/>
    <property type="match status" value="2"/>
</dbReference>
<dbReference type="PROSITE" id="PS51465">
    <property type="entry name" value="KAZAL_2"/>
    <property type="match status" value="9"/>
</dbReference>
<dbReference type="PROSITE" id="PS50025">
    <property type="entry name" value="LAM_G_DOMAIN"/>
    <property type="match status" value="3"/>
</dbReference>
<dbReference type="PROSITE" id="PS50024">
    <property type="entry name" value="SEA"/>
    <property type="match status" value="1"/>
</dbReference>
<feature type="chain" id="PRO_0000007472" description="Agrin">
    <location>
        <begin position="1"/>
        <end position="1959"/>
    </location>
</feature>
<feature type="chain" id="PRO_0000421621" description="Agrin N-terminal 110 kDa subunit">
    <location>
        <begin position="27"/>
        <end position="995"/>
    </location>
</feature>
<feature type="chain" id="PRO_0000421622" description="Agrin C-terminal 110 kDa subunit">
    <location>
        <begin position="996"/>
        <end position="1959"/>
    </location>
</feature>
<feature type="chain" id="PRO_0000421623" description="Agrin C-terminal 90 kDa fragment">
    <location>
        <begin position="996"/>
        <end position="1754"/>
    </location>
</feature>
<feature type="chain" id="PRO_0000421624" description="Agrin C-terminal 22 kDa fragment">
    <location>
        <begin position="1755"/>
        <end position="1959"/>
    </location>
</feature>
<feature type="topological domain" description="Cytoplasmic" evidence="3">
    <location>
        <begin position="1"/>
        <end position="26"/>
    </location>
</feature>
<feature type="transmembrane region" description="Helical; Signal-anchor for type II membrane protein" evidence="3">
    <location>
        <begin position="27"/>
        <end position="47"/>
    </location>
</feature>
<feature type="topological domain" description="Extracellular" evidence="3">
    <location>
        <begin position="48"/>
        <end position="1959"/>
    </location>
</feature>
<feature type="domain" description="Kazal-like 1" evidence="8">
    <location>
        <begin position="86"/>
        <end position="139"/>
    </location>
</feature>
<feature type="domain" description="Kazal-like 2" evidence="8">
    <location>
        <begin position="159"/>
        <end position="214"/>
    </location>
</feature>
<feature type="domain" description="Kazal-like 3" evidence="8">
    <location>
        <begin position="232"/>
        <end position="286"/>
    </location>
</feature>
<feature type="domain" description="Kazal-like 4" evidence="8">
    <location>
        <begin position="303"/>
        <end position="358"/>
    </location>
</feature>
<feature type="domain" description="Kazal-like 5" evidence="8">
    <location>
        <begin position="379"/>
        <end position="431"/>
    </location>
</feature>
<feature type="domain" description="Kazal-like 6" evidence="8">
    <location>
        <begin position="442"/>
        <end position="496"/>
    </location>
</feature>
<feature type="domain" description="Kazal-like 7" evidence="8">
    <location>
        <begin position="502"/>
        <end position="561"/>
    </location>
</feature>
<feature type="domain" description="Kazal-like 8" evidence="8">
    <location>
        <begin position="594"/>
        <end position="647"/>
    </location>
</feature>
<feature type="domain" description="Laminin EGF-like 1" evidence="7">
    <location>
        <begin position="688"/>
        <end position="741"/>
    </location>
</feature>
<feature type="domain" description="Laminin EGF-like 2" evidence="7">
    <location>
        <begin position="742"/>
        <end position="788"/>
    </location>
</feature>
<feature type="domain" description="Kazal-like 9" evidence="8">
    <location>
        <begin position="810"/>
        <end position="866"/>
    </location>
</feature>
<feature type="domain" description="SEA" evidence="6">
    <location>
        <begin position="1023"/>
        <end position="1145"/>
    </location>
</feature>
<feature type="domain" description="EGF-like 1" evidence="4">
    <location>
        <begin position="1220"/>
        <end position="1258"/>
    </location>
</feature>
<feature type="domain" description="Laminin G-like 1" evidence="5">
    <location>
        <begin position="1263"/>
        <end position="1439"/>
    </location>
</feature>
<feature type="domain" description="EGF-like 2" evidence="4">
    <location>
        <begin position="1440"/>
        <end position="1477"/>
    </location>
</feature>
<feature type="domain" description="EGF-like 3" evidence="4">
    <location>
        <begin position="1479"/>
        <end position="1516"/>
    </location>
</feature>
<feature type="domain" description="Laminin G-like 2" evidence="5">
    <location>
        <begin position="1526"/>
        <end position="1708"/>
    </location>
</feature>
<feature type="domain" description="EGF-like 4" evidence="4">
    <location>
        <begin position="1709"/>
        <end position="1748"/>
    </location>
</feature>
<feature type="domain" description="Laminin G-like 3" evidence="5">
    <location>
        <begin position="1784"/>
        <end position="1956"/>
    </location>
</feature>
<feature type="region of interest" description="Disordered" evidence="9">
    <location>
        <begin position="951"/>
        <end position="980"/>
    </location>
</feature>
<feature type="region of interest" description="Disordered" evidence="9">
    <location>
        <begin position="1173"/>
        <end position="1228"/>
    </location>
</feature>
<feature type="compositionally biased region" description="Acidic residues" evidence="9">
    <location>
        <begin position="960"/>
        <end position="970"/>
    </location>
</feature>
<feature type="compositionally biased region" description="Low complexity" evidence="9">
    <location>
        <begin position="1192"/>
        <end position="1207"/>
    </location>
</feature>
<feature type="compositionally biased region" description="Polar residues" evidence="9">
    <location>
        <begin position="1216"/>
        <end position="1226"/>
    </location>
</feature>
<feature type="binding site" evidence="28 29">
    <location>
        <position position="1831"/>
    </location>
    <ligand>
        <name>Ca(2+)</name>
        <dbReference type="ChEBI" id="CHEBI:29108"/>
    </ligand>
</feature>
<feature type="binding site" evidence="28 29">
    <location>
        <position position="1848"/>
    </location>
    <ligand>
        <name>Ca(2+)</name>
        <dbReference type="ChEBI" id="CHEBI:29108"/>
    </ligand>
</feature>
<feature type="binding site" evidence="28 29">
    <location>
        <position position="1898"/>
    </location>
    <ligand>
        <name>Ca(2+)</name>
        <dbReference type="ChEBI" id="CHEBI:29108"/>
    </ligand>
</feature>
<feature type="binding site" evidence="28">
    <location>
        <position position="1900"/>
    </location>
    <ligand>
        <name>Ca(2+)</name>
        <dbReference type="ChEBI" id="CHEBI:29108"/>
    </ligand>
</feature>
<feature type="site" description="Cleavage, alpha site; by neurotrypsin">
    <location>
        <begin position="995"/>
        <end position="996"/>
    </location>
</feature>
<feature type="site" description="Alternative splice site to produce 'x' isoforms">
    <location>
        <position position="1143"/>
    </location>
</feature>
<feature type="site" description="Alternative splice site to produce 'y' isoforms">
    <location>
        <position position="1642"/>
    </location>
</feature>
<feature type="site" description="Critical for cleavage by neurotrypsin">
    <location>
        <position position="1753"/>
    </location>
</feature>
<feature type="site" description="Cleavage, beta site; by neurotrypsin">
    <location>
        <begin position="1754"/>
        <end position="1755"/>
    </location>
</feature>
<feature type="site" description="Alternative splice site to produce 'z' isoforms">
    <location>
        <position position="1779"/>
    </location>
</feature>
<feature type="site" description="Highly important for the agrin receptor complex activity of the 'z(8)' insert">
    <location>
        <position position="1783"/>
    </location>
</feature>
<feature type="modified residue" description="Phosphoserine" evidence="2">
    <location>
        <position position="569"/>
    </location>
</feature>
<feature type="modified residue" description="Phosphoserine" evidence="2">
    <location>
        <position position="571"/>
    </location>
</feature>
<feature type="glycosylation site" description="N-linked (GlcNAc...) asparagine" evidence="3">
    <location>
        <position position="145"/>
    </location>
</feature>
<feature type="glycosylation site" description="N-linked (GlcNAc...) asparagine" evidence="3">
    <location>
        <position position="672"/>
    </location>
</feature>
<feature type="glycosylation site" description="N-linked (GlcNAc...) asparagine" evidence="3">
    <location>
        <position position="827"/>
    </location>
</feature>
<feature type="glycosylation site" description="N-linked (GlcNAc...) asparagine" evidence="3">
    <location>
        <position position="957"/>
    </location>
</feature>
<feature type="glycosylation site" description="O-linked (Fuc...) serine" evidence="14">
    <location>
        <position position="1726"/>
    </location>
</feature>
<feature type="disulfide bond" evidence="8">
    <location>
        <begin position="92"/>
        <end position="123"/>
    </location>
</feature>
<feature type="disulfide bond" evidence="8">
    <location>
        <begin position="97"/>
        <end position="116"/>
    </location>
</feature>
<feature type="disulfide bond" evidence="8">
    <location>
        <begin position="105"/>
        <end position="137"/>
    </location>
</feature>
<feature type="disulfide bond" evidence="8">
    <location>
        <begin position="165"/>
        <end position="198"/>
    </location>
</feature>
<feature type="disulfide bond" evidence="8">
    <location>
        <begin position="171"/>
        <end position="191"/>
    </location>
</feature>
<feature type="disulfide bond" evidence="8">
    <location>
        <begin position="180"/>
        <end position="212"/>
    </location>
</feature>
<feature type="disulfide bond" evidence="8">
    <location>
        <begin position="244"/>
        <end position="263"/>
    </location>
</feature>
<feature type="disulfide bond" evidence="8">
    <location>
        <begin position="252"/>
        <end position="284"/>
    </location>
</feature>
<feature type="disulfide bond" evidence="8">
    <location>
        <begin position="309"/>
        <end position="342"/>
    </location>
</feature>
<feature type="disulfide bond" evidence="8">
    <location>
        <begin position="316"/>
        <end position="335"/>
    </location>
</feature>
<feature type="disulfide bond" evidence="8">
    <location>
        <begin position="324"/>
        <end position="356"/>
    </location>
</feature>
<feature type="disulfide bond" evidence="8">
    <location>
        <begin position="385"/>
        <end position="415"/>
    </location>
</feature>
<feature type="disulfide bond" evidence="8">
    <location>
        <begin position="389"/>
        <end position="408"/>
    </location>
</feature>
<feature type="disulfide bond" evidence="8">
    <location>
        <begin position="397"/>
        <end position="429"/>
    </location>
</feature>
<feature type="disulfide bond" evidence="8">
    <location>
        <begin position="448"/>
        <end position="480"/>
    </location>
</feature>
<feature type="disulfide bond" evidence="8">
    <location>
        <begin position="454"/>
        <end position="473"/>
    </location>
</feature>
<feature type="disulfide bond" evidence="8">
    <location>
        <begin position="462"/>
        <end position="494"/>
    </location>
</feature>
<feature type="disulfide bond" evidence="8">
    <location>
        <begin position="508"/>
        <end position="545"/>
    </location>
</feature>
<feature type="disulfide bond" evidence="8">
    <location>
        <begin position="518"/>
        <end position="538"/>
    </location>
</feature>
<feature type="disulfide bond" evidence="8">
    <location>
        <begin position="527"/>
        <end position="559"/>
    </location>
</feature>
<feature type="disulfide bond" evidence="8">
    <location>
        <begin position="600"/>
        <end position="631"/>
    </location>
</feature>
<feature type="disulfide bond" evidence="8">
    <location>
        <begin position="604"/>
        <end position="624"/>
    </location>
</feature>
<feature type="disulfide bond" evidence="8">
    <location>
        <begin position="613"/>
        <end position="645"/>
    </location>
</feature>
<feature type="disulfide bond" evidence="1">
    <location>
        <begin position="688"/>
        <end position="700"/>
    </location>
</feature>
<feature type="disulfide bond" evidence="1">
    <location>
        <begin position="690"/>
        <end position="707"/>
    </location>
</feature>
<feature type="disulfide bond" evidence="1">
    <location>
        <begin position="709"/>
        <end position="718"/>
    </location>
</feature>
<feature type="disulfide bond" evidence="1">
    <location>
        <begin position="721"/>
        <end position="739"/>
    </location>
</feature>
<feature type="disulfide bond" evidence="1">
    <location>
        <begin position="742"/>
        <end position="754"/>
    </location>
</feature>
<feature type="disulfide bond" evidence="1">
    <location>
        <begin position="744"/>
        <end position="761"/>
    </location>
</feature>
<feature type="disulfide bond" evidence="1">
    <location>
        <begin position="763"/>
        <end position="772"/>
    </location>
</feature>
<feature type="disulfide bond" evidence="1">
    <location>
        <begin position="775"/>
        <end position="786"/>
    </location>
</feature>
<feature type="disulfide bond" evidence="8">
    <location>
        <begin position="816"/>
        <end position="850"/>
    </location>
</feature>
<feature type="disulfide bond" evidence="8">
    <location>
        <begin position="823"/>
        <end position="843"/>
    </location>
</feature>
<feature type="disulfide bond" evidence="8">
    <location>
        <begin position="832"/>
        <end position="864"/>
    </location>
</feature>
<feature type="disulfide bond" evidence="1">
    <location>
        <begin position="1224"/>
        <end position="1235"/>
    </location>
</feature>
<feature type="disulfide bond" evidence="1">
    <location>
        <begin position="1229"/>
        <end position="1246"/>
    </location>
</feature>
<feature type="disulfide bond" evidence="1">
    <location>
        <begin position="1248"/>
        <end position="1257"/>
    </location>
</feature>
<feature type="disulfide bond" evidence="1">
    <location>
        <begin position="1410"/>
        <end position="1439"/>
    </location>
</feature>
<feature type="disulfide bond" evidence="1">
    <location>
        <begin position="1483"/>
        <end position="1494"/>
    </location>
</feature>
<feature type="disulfide bond" evidence="1">
    <location>
        <begin position="1488"/>
        <end position="1504"/>
    </location>
</feature>
<feature type="disulfide bond" evidence="1">
    <location>
        <begin position="1506"/>
        <end position="1515"/>
    </location>
</feature>
<feature type="disulfide bond" evidence="1">
    <location>
        <begin position="1713"/>
        <end position="1727"/>
    </location>
</feature>
<feature type="disulfide bond" evidence="1">
    <location>
        <begin position="1721"/>
        <end position="1736"/>
    </location>
</feature>
<feature type="disulfide bond" evidence="1">
    <location>
        <begin position="1738"/>
        <end position="1747"/>
    </location>
</feature>
<feature type="disulfide bond" evidence="1">
    <location>
        <begin position="1930"/>
        <end position="1956"/>
    </location>
</feature>
<feature type="splice variant" id="VSP_001365" description="In isoform 2." evidence="25">
    <location>
        <begin position="1144"/>
        <end position="1152"/>
    </location>
</feature>
<feature type="splice variant" id="VSP_045759" description="In isoform 6." evidence="27">
    <location>
        <begin position="1643"/>
        <end position="1646"/>
    </location>
</feature>
<feature type="splice variant" id="VSP_001366" description="In isoform 3." evidence="25 26">
    <location>
        <begin position="1780"/>
        <end position="1798"/>
    </location>
</feature>
<feature type="splice variant" id="VSP_001368" description="In isoform 5." evidence="25">
    <location>
        <begin position="1780"/>
        <end position="1787"/>
    </location>
</feature>
<feature type="splice variant" id="VSP_001367" description="In isoform 4." evidence="25">
    <location>
        <begin position="1788"/>
        <end position="1798"/>
    </location>
</feature>
<feature type="mutagenesis site" description="Abolishes heparan sulfate (HS) binding, greatly reduced branched retraction fiber (BRF) formation, filopodia formation reduced by about 50% and lowered RAC1 and CDK1 activation. No chondroitin sulfate (CS) nor heparan sulfate attachment, almost no branched retraction fiber (BRF) formation, filopodia formation reduced by about 60% and lowered RAC1 and CDK1 activation; when associated with 953-AGA-955.">
    <original>SGGSGS</original>
    <variation>AGGAGA</variation>
    <location>
        <begin position="566"/>
        <end position="571"/>
    </location>
</feature>
<feature type="mutagenesis site" description="Abolishes chondroitin sulfate (CS) binding, greatly reduced branched retraction fiber (BRF) formation, filopodia formation reduced by about 50% and lowered RAC1 and CDK1 activation. No chondroitin sulfate (CS) nor heparan sulfate (HS) binding almost no retraction fiber (BRF) formation, filopodia formation reduced by about 60% lowered RAC1 and CDK1 activation; when associated with 566-AGGAGA-571.">
    <original>SGS</original>
    <variation>AGA</variation>
    <location>
        <begin position="953"/>
        <end position="955"/>
    </location>
</feature>
<feature type="mutagenesis site" description="About 13% reduction in cleavage by neurotrypsin." evidence="12">
    <original>P</original>
    <variation>A</variation>
    <location>
        <position position="991"/>
    </location>
</feature>
<feature type="mutagenesis site" description="About 64% reduction in cleavage by neurotrypsin." evidence="12">
    <original>P</original>
    <variation>A</variation>
    <location>
        <position position="992"/>
    </location>
</feature>
<feature type="mutagenesis site" description="About 60% reduction in cleavage by neurotrypsin." evidence="12">
    <original>I</original>
    <variation>A</variation>
    <location>
        <position position="993"/>
    </location>
</feature>
<feature type="mutagenesis site" description="Almost completely abolishes cleavage by neurotrypsin." evidence="12">
    <original>E</original>
    <variation>A</variation>
    <location>
        <position position="994"/>
    </location>
</feature>
<feature type="mutagenesis site" description="Completely abolishes cleavage by neurotrypsin." evidence="12">
    <original>R</original>
    <variation>A</variation>
    <location>
        <position position="995"/>
    </location>
</feature>
<feature type="mutagenesis site" description="About 30% reduction in cleavage by neurotrypsin." evidence="12">
    <original>R</original>
    <variation>K</variation>
    <location>
        <position position="995"/>
    </location>
</feature>
<feature type="mutagenesis site" description="Abolishes fucosylation of muscle agrin. Stimulates MUSK phosphorylation and increases AChR clustering." evidence="14">
    <original>S</original>
    <variation>A</variation>
    <location>
        <position position="1726"/>
    </location>
</feature>
<feature type="mutagenesis site" description="About 23% reduction in cleavage by neurotrypsin. Reduces cleavage by neurotrypsin by about 90%; when associated with A-1752. Completely abolishes cleavage by neurotrypsin; when associated with A-1753." evidence="12">
    <original>L</original>
    <variation>A</variation>
    <location>
        <position position="1751"/>
    </location>
</feature>
<feature type="mutagenesis site" description="About 41% reduction in cleavage by neurotrypsin. Reduces cleavage by neurotrypsin by about 90%; when associated with A-1751. Completely abolishes cleavage by neurotrypsin; when associated with A-1753." evidence="12">
    <original>V</original>
    <variation>A</variation>
    <location>
        <position position="1752"/>
    </location>
</feature>
<feature type="mutagenesis site" description="Almost completely abolishes cleavage by neurotrypsin. Completely abolishes cleavage by neurotrypsin; when associated with A-1751 or A-1752." evidence="12">
    <original>E</original>
    <variation>A</variation>
    <variation>K</variation>
    <location>
        <position position="1753"/>
    </location>
</feature>
<feature type="mutagenesis site" description="About 20% reduction in cleavage by neurotrypsin." evidence="12">
    <original>E</original>
    <variation>D</variation>
    <variation>L</variation>
    <variation>Q</variation>
    <location>
        <position position="1753"/>
    </location>
</feature>
<feature type="mutagenesis site" description="Completely abolishes cleavage by neurotrypsin." evidence="12">
    <original>K</original>
    <variation>A</variation>
    <location>
        <position position="1754"/>
    </location>
</feature>
<feature type="mutagenesis site" description="About 55% reduction in cleavage by neurotrypsin." evidence="12">
    <original>K</original>
    <variation>R</variation>
    <location>
        <position position="1754"/>
    </location>
</feature>
<feature type="mutagenesis site" description="About 62% reduction in cleavage by neurotrypsin." evidence="12">
    <original>S</original>
    <variation>A</variation>
    <location>
        <position position="1755"/>
    </location>
</feature>
<feature type="mutagenesis site" description="Slight reduction in cleavage by neurotrypsin." evidence="12">
    <original>V</original>
    <variation>A</variation>
    <location>
        <position position="1756"/>
    </location>
</feature>
<feature type="mutagenesis site" description="Slight reduction in cleavage by neurotrypsin." evidence="12">
    <original>G</original>
    <variation>A</variation>
    <location>
        <position position="1757"/>
    </location>
</feature>
<feature type="mutagenesis site" description="Slight reduction in AChR clustering ability." evidence="18">
    <original>E</original>
    <variation>A</variation>
    <location>
        <position position="1780"/>
    </location>
</feature>
<feature type="mutagenesis site" description="Slight reduction in AChR clustering ability. Slight reduction in AChR clustering ability." evidence="18">
    <original>L</original>
    <variation>A</variation>
    <location>
        <position position="1781"/>
    </location>
</feature>
<feature type="mutagenesis site" description="Slight reduction in AChR clustering ability." evidence="18">
    <original>T</original>
    <variation>A</variation>
    <location>
        <position position="1782"/>
    </location>
</feature>
<feature type="mutagenesis site" description="Abolishes formation of AGRN-LRP4 complex and MUSK activation. No AChR clustering activity." evidence="18 20">
    <original>N</original>
    <variation>A</variation>
    <location>
        <position position="1783"/>
    </location>
</feature>
<feature type="mutagenesis site" description="Significant reduction in AChR clustering ability." evidence="18">
    <original>E</original>
    <variation>A</variation>
    <location>
        <position position="1784"/>
    </location>
</feature>
<feature type="mutagenesis site" description="Significant reduction in AChR clustering ability." evidence="18 20">
    <original>I</original>
    <variation>A</variation>
    <location>
        <position position="1785"/>
    </location>
</feature>
<feature type="mutagenesis site" description="Abolishes formation of AGRN-LRP4 complex and MUSK activation." evidence="18 20">
    <original>I</original>
    <variation>S</variation>
    <location>
        <position position="1785"/>
    </location>
</feature>
<feature type="mutagenesis site" description="Significant reduction in AChR clustering ability." evidence="18">
    <original>P</original>
    <variation>A</variation>
    <location>
        <position position="1786"/>
    </location>
</feature>
<feature type="mutagenesis site" description="No effect on formation of AGRN-LRP4 complex nor on MUSK activation." evidence="20">
    <original>H</original>
    <variation>L</variation>
    <location>
        <position position="1806"/>
    </location>
</feature>
<feature type="mutagenesis site" description="Abolishes calcium binding, lowering of binding to myotubes and some loss of AChR clustering activity; when associated with A-1900." evidence="18">
    <original>D</original>
    <variation>A</variation>
    <location>
        <position position="1831"/>
    </location>
</feature>
<feature type="mutagenesis site" description="No effect formation of AGRN-LRP4 complex nor on MUSK activation." evidence="20">
    <original>R</original>
    <variation>E</variation>
    <location>
        <position position="1876"/>
    </location>
</feature>
<feature type="mutagenesis site" description="Abolishes calcium binding, lowering of binding to myotubes and some loss of AChR clustering activity; when associated with A-1831." evidence="18">
    <original>D</original>
    <variation>A</variation>
    <location>
        <position position="1900"/>
    </location>
</feature>
<feature type="mutagenesis site" description="No effect formation of AGRN-LRP4 complex nor on MUSK activation." evidence="20">
    <original>H</original>
    <variation>L</variation>
    <location>
        <position position="1938"/>
    </location>
</feature>
<feature type="sequence conflict" description="In Ref. 1; AAA40702." evidence="27" ref="1">
    <location>
        <begin position="315"/>
        <end position="317"/>
    </location>
</feature>
<feature type="strand" evidence="30">
    <location>
        <begin position="1761"/>
        <end position="1767"/>
    </location>
</feature>
<feature type="strand" evidence="30">
    <location>
        <begin position="1770"/>
        <end position="1773"/>
    </location>
</feature>
<feature type="helix" evidence="30">
    <location>
        <begin position="1779"/>
        <end position="1782"/>
    </location>
</feature>
<feature type="strand" evidence="30">
    <location>
        <begin position="1800"/>
        <end position="1812"/>
    </location>
</feature>
<feature type="strand" evidence="30">
    <location>
        <begin position="1816"/>
        <end position="1824"/>
    </location>
</feature>
<feature type="strand" evidence="31">
    <location>
        <begin position="1826"/>
        <end position="1829"/>
    </location>
</feature>
<feature type="strand" evidence="30">
    <location>
        <begin position="1832"/>
        <end position="1838"/>
    </location>
</feature>
<feature type="strand" evidence="30">
    <location>
        <begin position="1841"/>
        <end position="1850"/>
    </location>
</feature>
<feature type="strand" evidence="30">
    <location>
        <begin position="1853"/>
        <end position="1860"/>
    </location>
</feature>
<feature type="strand" evidence="31">
    <location>
        <begin position="1863"/>
        <end position="1865"/>
    </location>
</feature>
<feature type="strand" evidence="30">
    <location>
        <begin position="1867"/>
        <end position="1874"/>
    </location>
</feature>
<feature type="strand" evidence="30">
    <location>
        <begin position="1877"/>
        <end position="1882"/>
    </location>
</feature>
<feature type="strand" evidence="30">
    <location>
        <begin position="1888"/>
        <end position="1891"/>
    </location>
</feature>
<feature type="strand" evidence="30">
    <location>
        <begin position="1899"/>
        <end position="1901"/>
    </location>
</feature>
<feature type="strand" evidence="30">
    <location>
        <begin position="1903"/>
        <end position="1908"/>
    </location>
</feature>
<feature type="helix" evidence="30">
    <location>
        <begin position="1921"/>
        <end position="1923"/>
    </location>
</feature>
<feature type="strand" evidence="30">
    <location>
        <begin position="1928"/>
        <end position="1936"/>
    </location>
</feature>
<feature type="turn" evidence="30">
    <location>
        <begin position="1943"/>
        <end position="1946"/>
    </location>
</feature>
<protein>
    <recommendedName>
        <fullName>Agrin</fullName>
    </recommendedName>
    <component>
        <recommendedName>
            <fullName>Agrin N-terminal 110 kDa subunit</fullName>
        </recommendedName>
    </component>
    <component>
        <recommendedName>
            <fullName>Agrin C-terminal 110 kDa subunit</fullName>
        </recommendedName>
    </component>
    <component>
        <recommendedName>
            <fullName>Agrin C-terminal 90 kDa fragment</fullName>
            <shortName>C90</shortName>
        </recommendedName>
    </component>
    <component>
        <recommendedName>
            <fullName>Agrin C-terminal 22 kDa fragment</fullName>
            <shortName>C22</shortName>
        </recommendedName>
    </component>
</protein>
<name>AGRIN_RAT</name>
<proteinExistence type="evidence at protein level"/>
<sequence length="1959" mass="208646">MPPLPLEHRPRQEPGASMLVRYFMIPCNICLILLATSTLGFAVLLFLSNYKPGIHFTPAPPTPPDVCRGMLCGFGAVCEPSVEDPGRASCVCKKNACPATVAPVCGSDASTYSNECELQRAQCNQQRRIRLLRQGPCGSRDPCANVTCSFGSTCVPSADGQTASCLCPTTCFGAPDGTVCGSDGVDYPSECQLLSHACASQEHIFKKFNGPCDPCQGSMSDLNHICRVNPRTRHPEMLLRPENCPAQHTPICGDDGVTYENDCVMSRIGATRGLLLQKVRSGQCQTRDQCPETCQFNSVCLSRRGRPHCSCDRVTCDGSYRPVCAQDGHTYNNDCWRQQAECRQQRAIPPKHQGPCDQTPSPCHGVQCAFGAVCTVKNGKAECECQRVCSGIYDPVCGSDGVTYGSVCELESMACTLGREIQVARRGPCDPCGQCRFGSLCEVETGRCVCPSECVESAQPVCGSDGHTYASECELHVHACTHQISLYVASAGHCQTCGEKVCTFGAVCSAGQCVCPRCEHPPPGPVCGSDGVTYLSACELREAACQQQVQIEEAHAGPCEPAECGSGGSGSGEDDECEQELCRQRGGIWDEDSEDGPCVCDFSCQSVPRSPVCGSDGVTYGTECDLKKARCESQQELYVAAQGACRGPTLAPLLPVAFPHCAQTPYGCCQDNFTAAQGVGLAGCPSTCHCNPHGSYSGTCDPATGQCSCRPGVGGLRCDRCEPGFWNFRGIVTDGHSGCTPCSCDPRGAVRDDCEQMTGLCSCRPGVAGPKCGQCPDGQVLGHLGCEADPMTPVTCVEIHCEFGASCVEKAGFAQCICPTLTCPEANSTKVCGSDGVTYGNECQLKAIACRQRLDISTQSLGPCQESVTPGASPTSASMTTPRHILSKTLPFPHNSLPLSPGSTTHDWPTPLPISPHTTVSIPRSTAWPVLTVPPTAAASDVTSLATSIFSESGSANGSGDEELSGDEEASGGGSGGLEPPVGSIVVTHGPPIERASCYNSPLGCCSDGKTPSLDSEGSNCPATKAFQGVLELEGVEGQELFYTPEMADPKSELFGETARSIESTLDDLFRNSDVKKDFWSVRLRELGPGKLVRAIVDVHFDPTTAFQASDVGQALLRQIQVSRPWALAVRRPLQEHVRFLDFDWFPTFFTGAATGTTAAMATARATTVSRLPASSVTPRVYPSHTSRPVGRTTAPPTTRRPPTTATNMDRPRTPGHQQPSKSCDSQPCLHGGTCQDQDSGKGFTCSCTAGRGGSVCEKVQPPSMPAFKGHSFLAFPTLRAYHTLRLALEFRALETEGLLLYNGNARGKDFLALALLDGRVQFRFDTGSGPAVLTSLVPVEPGRWHRLELSRHWRQGTLSVDGETPVVGESPSGTDGLNLDTNLYVGGIPEEQVAMVLDRTSVGVGLKGCIRMLDINNQQLELSDWQRAAVQSSGVGECGDHPCLPNPCHGGALCQALEAGMFLCQCPPGRFGPTCADEKSPCQPNPCHGAAPCRVLSSGGAKCECPLGRSGTFCQTVLETAGSRPFLADFNGFSYLELKGLHTFERDLGEKMALEMVFLARGPSGLLLYNGQKTDGKGDFVSLALHNRHLEFCYDLGKGAAVIRSKEPIALGTWVRVFLERNGRKGALQVGDGPRVLGESPKSRKVPHTMLNLKEPLYIGGAPDFSKLARGAAVSSGFSGVIQLVSLRGHQLLTQEHVLRAVDVSPFADHPCTQALGNPCLNGGSCVPREATYECLCPGGFSGLHCEKGLVEKSVGDLETLAFDGRTYIEYLNAVIESELTNEIPAPETLDSRALFSEKALQSNHFELSLRTEATQGLVLWIGKAAERADYMALAIVDGHLQLSYDLGSQPVVLRSTVKVNTNRWLRIRAHREHREGSLQVGNEAPVTGSSPLGATQLDTDGALWLGGLQKLPVGQALPKAYGTGFVGCLRDVVVGHRQLHLLEDAVTKPELRPCPTP</sequence>
<accession>P25304</accession>
<accession>Q63034</accession>
<evidence type="ECO:0000250" key="1"/>
<evidence type="ECO:0000250" key="2">
    <source>
        <dbReference type="UniProtKB" id="A2ASQ1"/>
    </source>
</evidence>
<evidence type="ECO:0000255" key="3"/>
<evidence type="ECO:0000255" key="4">
    <source>
        <dbReference type="PROSITE-ProRule" id="PRU00076"/>
    </source>
</evidence>
<evidence type="ECO:0000255" key="5">
    <source>
        <dbReference type="PROSITE-ProRule" id="PRU00122"/>
    </source>
</evidence>
<evidence type="ECO:0000255" key="6">
    <source>
        <dbReference type="PROSITE-ProRule" id="PRU00188"/>
    </source>
</evidence>
<evidence type="ECO:0000255" key="7">
    <source>
        <dbReference type="PROSITE-ProRule" id="PRU00460"/>
    </source>
</evidence>
<evidence type="ECO:0000255" key="8">
    <source>
        <dbReference type="PROSITE-ProRule" id="PRU00798"/>
    </source>
</evidence>
<evidence type="ECO:0000256" key="9">
    <source>
        <dbReference type="SAM" id="MobiDB-lite"/>
    </source>
</evidence>
<evidence type="ECO:0000269" key="10">
    <source>
    </source>
</evidence>
<evidence type="ECO:0000269" key="11">
    <source>
    </source>
</evidence>
<evidence type="ECO:0000269" key="12">
    <source>
    </source>
</evidence>
<evidence type="ECO:0000269" key="13">
    <source>
    </source>
</evidence>
<evidence type="ECO:0000269" key="14">
    <source>
    </source>
</evidence>
<evidence type="ECO:0000269" key="15">
    <source>
    </source>
</evidence>
<evidence type="ECO:0000269" key="16">
    <source>
    </source>
</evidence>
<evidence type="ECO:0000269" key="17">
    <source>
    </source>
</evidence>
<evidence type="ECO:0000269" key="18">
    <source>
    </source>
</evidence>
<evidence type="ECO:0000269" key="19">
    <source>
    </source>
</evidence>
<evidence type="ECO:0000269" key="20">
    <source>
    </source>
</evidence>
<evidence type="ECO:0000269" key="21">
    <source>
    </source>
</evidence>
<evidence type="ECO:0000269" key="22">
    <source>
    </source>
</evidence>
<evidence type="ECO:0000269" key="23">
    <source>
    </source>
</evidence>
<evidence type="ECO:0000269" key="24">
    <source>
    </source>
</evidence>
<evidence type="ECO:0000303" key="25">
    <source>
    </source>
</evidence>
<evidence type="ECO:0000303" key="26">
    <source>
    </source>
</evidence>
<evidence type="ECO:0000305" key="27"/>
<evidence type="ECO:0007744" key="28">
    <source>
        <dbReference type="PDB" id="3V64"/>
    </source>
</evidence>
<evidence type="ECO:0007744" key="29">
    <source>
        <dbReference type="PDB" id="3V65"/>
    </source>
</evidence>
<evidence type="ECO:0007829" key="30">
    <source>
        <dbReference type="PDB" id="3V64"/>
    </source>
</evidence>
<evidence type="ECO:0007829" key="31">
    <source>
        <dbReference type="PDB" id="3V65"/>
    </source>
</evidence>